<organismHost>
    <name type="scientific">Acanthamoeba polyphaga</name>
    <name type="common">Amoeba</name>
    <dbReference type="NCBI Taxonomy" id="5757"/>
</organismHost>
<accession>Q5UPV5</accession>
<proteinExistence type="predicted"/>
<organism>
    <name type="scientific">Acanthamoeba polyphaga mimivirus</name>
    <name type="common">APMV</name>
    <dbReference type="NCBI Taxonomy" id="212035"/>
    <lineage>
        <taxon>Viruses</taxon>
        <taxon>Varidnaviria</taxon>
        <taxon>Bamfordvirae</taxon>
        <taxon>Nucleocytoviricota</taxon>
        <taxon>Megaviricetes</taxon>
        <taxon>Imitervirales</taxon>
        <taxon>Mimiviridae</taxon>
        <taxon>Megamimivirinae</taxon>
        <taxon>Mimivirus</taxon>
        <taxon>Mimivirus bradfordmassiliense</taxon>
    </lineage>
</organism>
<feature type="chain" id="PRO_0000067167" description="Putative ankyrin repeat protein L279">
    <location>
        <begin position="1"/>
        <end position="470"/>
    </location>
</feature>
<feature type="repeat" description="ANK 1">
    <location>
        <begin position="119"/>
        <end position="148"/>
    </location>
</feature>
<feature type="repeat" description="ANK 2">
    <location>
        <begin position="149"/>
        <end position="178"/>
    </location>
</feature>
<feature type="repeat" description="ANK 3">
    <location>
        <begin position="372"/>
        <end position="401"/>
    </location>
</feature>
<feature type="repeat" description="ANK 4">
    <location>
        <begin position="403"/>
        <end position="431"/>
    </location>
</feature>
<sequence length="470" mass="54711">MKSKIYFKFTTEKDEIDGVYKDGLNIYKTSNTITNISSDNKKEGITYLDPSKSARCLYRDAKYLRIVRLHKDTVSVKQDYLNDNGRFWADKLYLGKRFELSDPFTIMYMIKMGYNVRERDDYMLEWACAGNFTEVARYLLKIGANPGTNKYACFESAVRNGNYDMVKLLLENIPGSDKFYYKMLEVFKNKSRYCGPEISKLFFNYVRDCDIDYIIRHDTQKLYVLEDTEFVKSLVGRGLGIGKFIDRTEPKFDKYYLECVVRGFLDTMKYFDTIDTTIVTRNQQQLIEKAVLSKNLDVFKYLEQNIDVGPMIDDLILKCMKIDLFVFVKYMIEKYNVINVLDTNKLIENISLCCNMEMIEYMTNLTGISIPETQGLLTNACQYNNSELVKYLLEKGANVNEFNGKPLREAIKNNNKDIIKNLMDYSPDISLDNYAAIRESFATFPEIAKKLAVGISIEKLHEIIFDQKIS</sequence>
<protein>
    <recommendedName>
        <fullName>Putative ankyrin repeat protein L279</fullName>
    </recommendedName>
</protein>
<reference key="1">
    <citation type="journal article" date="2004" name="Science">
        <title>The 1.2-megabase genome sequence of Mimivirus.</title>
        <authorList>
            <person name="Raoult D."/>
            <person name="Audic S."/>
            <person name="Robert C."/>
            <person name="Abergel C."/>
            <person name="Renesto P."/>
            <person name="Ogata H."/>
            <person name="La Scola B."/>
            <person name="Susan M."/>
            <person name="Claverie J.-M."/>
        </authorList>
    </citation>
    <scope>NUCLEOTIDE SEQUENCE [LARGE SCALE GENOMIC DNA]</scope>
    <source>
        <strain>Rowbotham-Bradford</strain>
    </source>
</reference>
<keyword id="KW-0040">ANK repeat</keyword>
<keyword id="KW-1185">Reference proteome</keyword>
<keyword id="KW-0677">Repeat</keyword>
<gene>
    <name type="ordered locus">MIMI_L279</name>
</gene>
<dbReference type="EMBL" id="AY653733">
    <property type="protein sequence ID" value="AAV50551.1"/>
    <property type="molecule type" value="Genomic_DNA"/>
</dbReference>
<dbReference type="SMR" id="Q5UPV5"/>
<dbReference type="KEGG" id="vg:9924893"/>
<dbReference type="OrthoDB" id="32816at10239"/>
<dbReference type="Proteomes" id="UP000001134">
    <property type="component" value="Genome"/>
</dbReference>
<dbReference type="Gene3D" id="1.25.40.20">
    <property type="entry name" value="Ankyrin repeat-containing domain"/>
    <property type="match status" value="2"/>
</dbReference>
<dbReference type="InterPro" id="IPR051637">
    <property type="entry name" value="Ank_repeat_dom-contain_49"/>
</dbReference>
<dbReference type="InterPro" id="IPR002110">
    <property type="entry name" value="Ankyrin_rpt"/>
</dbReference>
<dbReference type="InterPro" id="IPR036770">
    <property type="entry name" value="Ankyrin_rpt-contain_sf"/>
</dbReference>
<dbReference type="PANTHER" id="PTHR24180">
    <property type="entry name" value="CYCLIN-DEPENDENT KINASE INHIBITOR 2C-RELATED"/>
    <property type="match status" value="1"/>
</dbReference>
<dbReference type="PANTHER" id="PTHR24180:SF45">
    <property type="entry name" value="POLY [ADP-RIBOSE] POLYMERASE TANKYRASE"/>
    <property type="match status" value="1"/>
</dbReference>
<dbReference type="Pfam" id="PF12796">
    <property type="entry name" value="Ank_2"/>
    <property type="match status" value="2"/>
</dbReference>
<dbReference type="SMART" id="SM00248">
    <property type="entry name" value="ANK"/>
    <property type="match status" value="4"/>
</dbReference>
<dbReference type="SUPFAM" id="SSF48403">
    <property type="entry name" value="Ankyrin repeat"/>
    <property type="match status" value="1"/>
</dbReference>
<dbReference type="PROSITE" id="PS50297">
    <property type="entry name" value="ANK_REP_REGION"/>
    <property type="match status" value="1"/>
</dbReference>
<dbReference type="PROSITE" id="PS50088">
    <property type="entry name" value="ANK_REPEAT"/>
    <property type="match status" value="1"/>
</dbReference>
<name>YL279_MIMIV</name>